<accession>Q1C1Y8</accession>
<comment type="function">
    <text evidence="1">Activates the small RNA gene sgrS under glucose-phosphate stress conditions as well as yfdZ. Represses its own transcription under both stress and non-stress conditions. Might act as a sensor of the intracellular accumulation of phosphoglucose by binding these molecules in its C-terminal solute-binding domain.</text>
</comment>
<organism>
    <name type="scientific">Yersinia pestis bv. Antiqua (strain Antiqua)</name>
    <dbReference type="NCBI Taxonomy" id="360102"/>
    <lineage>
        <taxon>Bacteria</taxon>
        <taxon>Pseudomonadati</taxon>
        <taxon>Pseudomonadota</taxon>
        <taxon>Gammaproteobacteria</taxon>
        <taxon>Enterobacterales</taxon>
        <taxon>Yersiniaceae</taxon>
        <taxon>Yersinia</taxon>
    </lineage>
</organism>
<proteinExistence type="inferred from homology"/>
<keyword id="KW-0010">Activator</keyword>
<keyword id="KW-0238">DNA-binding</keyword>
<keyword id="KW-0678">Repressor</keyword>
<keyword id="KW-0804">Transcription</keyword>
<keyword id="KW-0805">Transcription regulation</keyword>
<sequence>MSTSRLQQQFIRLWQRYNGQSTETTLQALAEVLNCSRRHVRSLLGKMQHAGWLDWQAEAGRGKRSQLIFLRSGLALQQQRAEELLEQDHIDQLVQLVGDKKAVRQMLLSQLGRSFRQGKHILRVLYYRPLENLLPGTALRRSETHMVRQIFNGLTRINEENGELEPDLSHHWQAITPLHWRFYLRPAIHFHHGRELEMSDVISSLTRLIPQPLFSHIAEVRSPTPYVIDVYLHSPDHWLPWLLGSVHAMILPQEWETQPDFHRQPIGTGPYSVIRNHHSQLKIQAFDNYFGFRALIDEVNIWVLPELSEELVYSGVQLQADDTGKNELESRLEEGCYFLLFDQRSPQACTPEIRRWLCELITPIALLSHAAPFYQRYWSPAYGMLPRWHHNRLTTQEPKPEGLNELTLTFYSEHSEFDAISQTLTQLLAAQGVTLKIQVLDYTRWYQGDAQSDIWLGSANFYLPLEFSLFATLYEMPLLQHCLSEELHQDIESWRNNTLLMADWSQRLVSQHQFHPLFHHWLELYGQHSMRGVRMNTLGWFDFKSAWFTPPEA</sequence>
<dbReference type="EMBL" id="CP000308">
    <property type="protein sequence ID" value="ABG15534.1"/>
    <property type="molecule type" value="Genomic_DNA"/>
</dbReference>
<dbReference type="RefSeq" id="WP_002210461.1">
    <property type="nucleotide sequence ID" value="NZ_CP009906.1"/>
</dbReference>
<dbReference type="SMR" id="Q1C1Y8"/>
<dbReference type="GeneID" id="57974087"/>
<dbReference type="KEGG" id="ypa:YPA_3572"/>
<dbReference type="Proteomes" id="UP000001971">
    <property type="component" value="Chromosome"/>
</dbReference>
<dbReference type="GO" id="GO:0003677">
    <property type="term" value="F:DNA binding"/>
    <property type="evidence" value="ECO:0007669"/>
    <property type="project" value="UniProtKB-KW"/>
</dbReference>
<dbReference type="GO" id="GO:1904680">
    <property type="term" value="F:peptide transmembrane transporter activity"/>
    <property type="evidence" value="ECO:0007669"/>
    <property type="project" value="TreeGrafter"/>
</dbReference>
<dbReference type="GO" id="GO:0045892">
    <property type="term" value="P:negative regulation of DNA-templated transcription"/>
    <property type="evidence" value="ECO:0007669"/>
    <property type="project" value="UniProtKB-UniRule"/>
</dbReference>
<dbReference type="GO" id="GO:0015833">
    <property type="term" value="P:peptide transport"/>
    <property type="evidence" value="ECO:0007669"/>
    <property type="project" value="TreeGrafter"/>
</dbReference>
<dbReference type="GO" id="GO:0045893">
    <property type="term" value="P:positive regulation of DNA-templated transcription"/>
    <property type="evidence" value="ECO:0007669"/>
    <property type="project" value="UniProtKB-UniRule"/>
</dbReference>
<dbReference type="CDD" id="cd08507">
    <property type="entry name" value="PBP2_SgrR_like"/>
    <property type="match status" value="1"/>
</dbReference>
<dbReference type="FunFam" id="3.40.190.10:FF:000070">
    <property type="entry name" value="HTH-type transcriptional regulator SgrR"/>
    <property type="match status" value="1"/>
</dbReference>
<dbReference type="Gene3D" id="3.40.190.10">
    <property type="entry name" value="Periplasmic binding protein-like II"/>
    <property type="match status" value="1"/>
</dbReference>
<dbReference type="HAMAP" id="MF_01449">
    <property type="entry name" value="HTH_type_SgrR"/>
    <property type="match status" value="1"/>
</dbReference>
<dbReference type="InterPro" id="IPR039424">
    <property type="entry name" value="SBP_5"/>
</dbReference>
<dbReference type="InterPro" id="IPR000914">
    <property type="entry name" value="SBP_5_dom"/>
</dbReference>
<dbReference type="InterPro" id="IPR025370">
    <property type="entry name" value="SgrR_HTH_N"/>
</dbReference>
<dbReference type="InterPro" id="IPR023767">
    <property type="entry name" value="Tscrpt_reg_SgrR"/>
</dbReference>
<dbReference type="InterPro" id="IPR036390">
    <property type="entry name" value="WH_DNA-bd_sf"/>
</dbReference>
<dbReference type="NCBIfam" id="NF010149">
    <property type="entry name" value="PRK13626.1"/>
    <property type="match status" value="1"/>
</dbReference>
<dbReference type="PANTHER" id="PTHR30290:SF72">
    <property type="entry name" value="HTH-TYPE TRANSCRIPTIONAL REGULATOR SGRR"/>
    <property type="match status" value="1"/>
</dbReference>
<dbReference type="PANTHER" id="PTHR30290">
    <property type="entry name" value="PERIPLASMIC BINDING COMPONENT OF ABC TRANSPORTER"/>
    <property type="match status" value="1"/>
</dbReference>
<dbReference type="Pfam" id="PF00496">
    <property type="entry name" value="SBP_bac_5"/>
    <property type="match status" value="1"/>
</dbReference>
<dbReference type="Pfam" id="PF12793">
    <property type="entry name" value="SgrR_N"/>
    <property type="match status" value="1"/>
</dbReference>
<dbReference type="SUPFAM" id="SSF53850">
    <property type="entry name" value="Periplasmic binding protein-like II"/>
    <property type="match status" value="1"/>
</dbReference>
<dbReference type="SUPFAM" id="SSF46785">
    <property type="entry name" value="Winged helix' DNA-binding domain"/>
    <property type="match status" value="1"/>
</dbReference>
<feature type="chain" id="PRO_0000309258" description="HTH-type transcriptional regulator SgrR">
    <location>
        <begin position="1"/>
        <end position="553"/>
    </location>
</feature>
<feature type="domain" description="HTH marR-type" evidence="1">
    <location>
        <begin position="1"/>
        <end position="113"/>
    </location>
</feature>
<feature type="DNA-binding region" description="H-T-H motif" evidence="1">
    <location>
        <begin position="26"/>
        <end position="49"/>
    </location>
</feature>
<feature type="region of interest" description="Solute-binding" evidence="1">
    <location>
        <begin position="163"/>
        <end position="494"/>
    </location>
</feature>
<protein>
    <recommendedName>
        <fullName evidence="1">HTH-type transcriptional regulator SgrR</fullName>
    </recommendedName>
</protein>
<gene>
    <name evidence="1" type="primary">sgrR</name>
    <name type="ordered locus">YPA_3572</name>
</gene>
<evidence type="ECO:0000255" key="1">
    <source>
        <dbReference type="HAMAP-Rule" id="MF_01449"/>
    </source>
</evidence>
<name>SGRR_YERPA</name>
<reference key="1">
    <citation type="journal article" date="2006" name="J. Bacteriol.">
        <title>Complete genome sequence of Yersinia pestis strains Antiqua and Nepal516: evidence of gene reduction in an emerging pathogen.</title>
        <authorList>
            <person name="Chain P.S.G."/>
            <person name="Hu P."/>
            <person name="Malfatti S.A."/>
            <person name="Radnedge L."/>
            <person name="Larimer F."/>
            <person name="Vergez L.M."/>
            <person name="Worsham P."/>
            <person name="Chu M.C."/>
            <person name="Andersen G.L."/>
        </authorList>
    </citation>
    <scope>NUCLEOTIDE SEQUENCE [LARGE SCALE GENOMIC DNA]</scope>
    <source>
        <strain>Antiqua</strain>
    </source>
</reference>